<sequence>MTHWHITSWVVALILVFVSYGLYGSGKAKGAKITHMILRLFYIIIILTGAELFVRFANWNGEYAGKMLLGIITIGLMEMLVIRKKKGKSTGGLWIGFIIVLVLTVLLGLHLPIGFHVF</sequence>
<accession>A7Z380</accession>
<comment type="subcellular location">
    <subcellularLocation>
        <location evidence="1">Cell membrane</location>
        <topology evidence="1">Multi-pass membrane protein</topology>
    </subcellularLocation>
</comment>
<comment type="similarity">
    <text evidence="1">Belongs to the UPF0344 family.</text>
</comment>
<proteinExistence type="inferred from homology"/>
<keyword id="KW-1003">Cell membrane</keyword>
<keyword id="KW-0472">Membrane</keyword>
<keyword id="KW-0812">Transmembrane</keyword>
<keyword id="KW-1133">Transmembrane helix</keyword>
<protein>
    <recommendedName>
        <fullName evidence="1">UPF0344 protein RBAM_010920</fullName>
    </recommendedName>
</protein>
<reference key="1">
    <citation type="journal article" date="2007" name="Nat. Biotechnol.">
        <title>Comparative analysis of the complete genome sequence of the plant growth-promoting bacterium Bacillus amyloliquefaciens FZB42.</title>
        <authorList>
            <person name="Chen X.H."/>
            <person name="Koumoutsi A."/>
            <person name="Scholz R."/>
            <person name="Eisenreich A."/>
            <person name="Schneider K."/>
            <person name="Heinemeyer I."/>
            <person name="Morgenstern B."/>
            <person name="Voss B."/>
            <person name="Hess W.R."/>
            <person name="Reva O."/>
            <person name="Junge H."/>
            <person name="Voigt B."/>
            <person name="Jungblut P.R."/>
            <person name="Vater J."/>
            <person name="Suessmuth R."/>
            <person name="Liesegang H."/>
            <person name="Strittmatter A."/>
            <person name="Gottschalk G."/>
            <person name="Borriss R."/>
        </authorList>
    </citation>
    <scope>NUCLEOTIDE SEQUENCE [LARGE SCALE GENOMIC DNA]</scope>
    <source>
        <strain>DSM 23117 / BGSC 10A6 / LMG 26770 / FZB42</strain>
    </source>
</reference>
<dbReference type="EMBL" id="CP000560">
    <property type="protein sequence ID" value="ABS73456.1"/>
    <property type="molecule type" value="Genomic_DNA"/>
</dbReference>
<dbReference type="RefSeq" id="WP_007409161.1">
    <property type="nucleotide sequence ID" value="NC_009725.2"/>
</dbReference>
<dbReference type="GeneID" id="93080229"/>
<dbReference type="KEGG" id="bay:RBAM_010920"/>
<dbReference type="HOGENOM" id="CLU_146641_1_1_9"/>
<dbReference type="Proteomes" id="UP000001120">
    <property type="component" value="Chromosome"/>
</dbReference>
<dbReference type="GO" id="GO:0005886">
    <property type="term" value="C:plasma membrane"/>
    <property type="evidence" value="ECO:0007669"/>
    <property type="project" value="UniProtKB-SubCell"/>
</dbReference>
<dbReference type="HAMAP" id="MF_01536">
    <property type="entry name" value="UPF0344"/>
    <property type="match status" value="1"/>
</dbReference>
<dbReference type="InterPro" id="IPR010899">
    <property type="entry name" value="UPF0344"/>
</dbReference>
<dbReference type="NCBIfam" id="NF010198">
    <property type="entry name" value="PRK13673.1-5"/>
    <property type="match status" value="1"/>
</dbReference>
<dbReference type="Pfam" id="PF07457">
    <property type="entry name" value="DUF1516"/>
    <property type="match status" value="1"/>
</dbReference>
<name>Y1092_BACVZ</name>
<gene>
    <name type="ordered locus">RBAM_010920</name>
</gene>
<organism>
    <name type="scientific">Bacillus velezensis (strain DSM 23117 / BGSC 10A6 / LMG 26770 / FZB42)</name>
    <name type="common">Bacillus amyloliquefaciens subsp. plantarum</name>
    <dbReference type="NCBI Taxonomy" id="326423"/>
    <lineage>
        <taxon>Bacteria</taxon>
        <taxon>Bacillati</taxon>
        <taxon>Bacillota</taxon>
        <taxon>Bacilli</taxon>
        <taxon>Bacillales</taxon>
        <taxon>Bacillaceae</taxon>
        <taxon>Bacillus</taxon>
        <taxon>Bacillus amyloliquefaciens group</taxon>
    </lineage>
</organism>
<feature type="chain" id="PRO_1000087603" description="UPF0344 protein RBAM_010920">
    <location>
        <begin position="1"/>
        <end position="118"/>
    </location>
</feature>
<feature type="transmembrane region" description="Helical" evidence="1">
    <location>
        <begin position="4"/>
        <end position="24"/>
    </location>
</feature>
<feature type="transmembrane region" description="Helical" evidence="1">
    <location>
        <begin position="33"/>
        <end position="53"/>
    </location>
</feature>
<feature type="transmembrane region" description="Helical" evidence="1">
    <location>
        <begin position="62"/>
        <end position="82"/>
    </location>
</feature>
<feature type="transmembrane region" description="Helical" evidence="1">
    <location>
        <begin position="93"/>
        <end position="113"/>
    </location>
</feature>
<evidence type="ECO:0000255" key="1">
    <source>
        <dbReference type="HAMAP-Rule" id="MF_01536"/>
    </source>
</evidence>